<comment type="function">
    <text evidence="1">Cold-inducible mRNA binding protein that plays a protective role in the genotoxic stress response by stabilizing transcripts of genes involved in cell survival. Acts as a translational activator. Seems to play an essential role in cold-induced suppression of cell proliferation. Binds specifically to the 3'-untranslated regions (3'-UTRs) of stress-responsive transcripts RPA2 and TXN. Acts as a translational repressor. Promotes assembly of stress granules (SGs), when overexpressed (By similarity).</text>
</comment>
<comment type="subunit">
    <text evidence="1">Interacts with EIF4G1. Associates with ribosomes (By similarity).</text>
</comment>
<comment type="subcellular location">
    <subcellularLocation>
        <location>Nucleus</location>
        <location>Nucleoplasm</location>
    </subcellularLocation>
    <subcellularLocation>
        <location>Cytoplasm</location>
    </subcellularLocation>
    <text evidence="1">Translocates from the nucleus to the cytoplasm after exposure to UV radiation. Translocates from the nucleus to the cytoplasm into stress granules upon various cytoplasmic stresses, such as osmotic and heat shocks. Its recruitment into stress granules occurs in the absence of TIAR proteins (By similarity).</text>
</comment>
<comment type="induction">
    <text>By cold stress.</text>
</comment>
<comment type="domain">
    <text evidence="1">Both the RRM domain and the arginine, glycine (RGG) rich domain are necessary for binding to the TXN 3'-untranslated region. Both the RRM domain and the arginine, glycine (RGG) rich domain (RGG repeats) are necessary for optimal recruitment into SGs upon cellular stress. The C-terminal domain containing RGG repeats is necessary for translational repression (By similarity).</text>
</comment>
<comment type="PTM">
    <text evidence="1">Methylated on arginine residues. Methylation of the RGG motifs is a prerequisite for recruitment into SGs (By similarity).</text>
</comment>
<comment type="PTM">
    <text evidence="1">Phosphorylated by CK2, GSK3A and GSK3B. Phosphorylation by GSK3B increases RNA-binding activity to the TXN 3'-UTR transcript upon exposure to UV radiation (By similarity).</text>
</comment>
<keyword id="KW-0963">Cytoplasm</keyword>
<keyword id="KW-0539">Nucleus</keyword>
<keyword id="KW-0597">Phosphoprotein</keyword>
<keyword id="KW-1185">Reference proteome</keyword>
<keyword id="KW-0694">RNA-binding</keyword>
<keyword id="KW-0346">Stress response</keyword>
<dbReference type="EMBL" id="AB000362">
    <property type="protein sequence ID" value="BAA19092.1"/>
    <property type="molecule type" value="mRNA"/>
</dbReference>
<dbReference type="RefSeq" id="NP_112409.2">
    <property type="nucleotide sequence ID" value="NM_031147.2"/>
</dbReference>
<dbReference type="RefSeq" id="XP_006241076.1">
    <property type="nucleotide sequence ID" value="XM_006241014.3"/>
</dbReference>
<dbReference type="RefSeq" id="XP_006241077.3">
    <property type="nucleotide sequence ID" value="XM_006241015.5"/>
</dbReference>
<dbReference type="SMR" id="P60825"/>
<dbReference type="FunCoup" id="P60825">
    <property type="interactions" value="2847"/>
</dbReference>
<dbReference type="IntAct" id="P60825">
    <property type="interactions" value="1"/>
</dbReference>
<dbReference type="STRING" id="10116.ENSRNOP00000021648"/>
<dbReference type="PhosphoSitePlus" id="P60825"/>
<dbReference type="jPOST" id="P60825"/>
<dbReference type="PaxDb" id="10116-ENSRNOP00000021648"/>
<dbReference type="Ensembl" id="ENSRNOT00000021648.7">
    <property type="protein sequence ID" value="ENSRNOP00000021648.4"/>
    <property type="gene ID" value="ENSRNOG00000031387.5"/>
</dbReference>
<dbReference type="GeneID" id="81825"/>
<dbReference type="KEGG" id="rno:81825"/>
<dbReference type="UCSC" id="RGD:620756">
    <property type="organism name" value="rat"/>
</dbReference>
<dbReference type="AGR" id="RGD:620756"/>
<dbReference type="CTD" id="1153"/>
<dbReference type="RGD" id="620756">
    <property type="gene designation" value="Cirbp"/>
</dbReference>
<dbReference type="eggNOG" id="KOG0118">
    <property type="taxonomic scope" value="Eukaryota"/>
</dbReference>
<dbReference type="GeneTree" id="ENSGT00940000156757"/>
<dbReference type="HOGENOM" id="CLU_012062_28_1_1"/>
<dbReference type="InParanoid" id="P60825"/>
<dbReference type="OMA" id="GWEDRSY"/>
<dbReference type="OrthoDB" id="439808at2759"/>
<dbReference type="PhylomeDB" id="P60825"/>
<dbReference type="TreeFam" id="TF354331"/>
<dbReference type="PRO" id="PR:P60825"/>
<dbReference type="Proteomes" id="UP000002494">
    <property type="component" value="Chromosome 7"/>
</dbReference>
<dbReference type="Bgee" id="ENSRNOG00000015999">
    <property type="expression patterns" value="Expressed in thymus and 20 other cell types or tissues"/>
</dbReference>
<dbReference type="GO" id="GO:0005737">
    <property type="term" value="C:cytoplasm"/>
    <property type="evidence" value="ECO:0000250"/>
    <property type="project" value="UniProtKB"/>
</dbReference>
<dbReference type="GO" id="GO:0010494">
    <property type="term" value="C:cytoplasmic stress granule"/>
    <property type="evidence" value="ECO:0000250"/>
    <property type="project" value="UniProtKB"/>
</dbReference>
<dbReference type="GO" id="GO:0005654">
    <property type="term" value="C:nucleoplasm"/>
    <property type="evidence" value="ECO:0000266"/>
    <property type="project" value="RGD"/>
</dbReference>
<dbReference type="GO" id="GO:0005634">
    <property type="term" value="C:nucleus"/>
    <property type="evidence" value="ECO:0000250"/>
    <property type="project" value="UniProtKB"/>
</dbReference>
<dbReference type="GO" id="GO:0005681">
    <property type="term" value="C:spliceosomal complex"/>
    <property type="evidence" value="ECO:0000318"/>
    <property type="project" value="GO_Central"/>
</dbReference>
<dbReference type="GO" id="GO:0003730">
    <property type="term" value="F:mRNA 3'-UTR binding"/>
    <property type="evidence" value="ECO:0000250"/>
    <property type="project" value="UniProtKB"/>
</dbReference>
<dbReference type="GO" id="GO:0008266">
    <property type="term" value="F:poly(U) RNA binding"/>
    <property type="evidence" value="ECO:0000266"/>
    <property type="project" value="RGD"/>
</dbReference>
<dbReference type="GO" id="GO:0003723">
    <property type="term" value="F:RNA binding"/>
    <property type="evidence" value="ECO:0000266"/>
    <property type="project" value="RGD"/>
</dbReference>
<dbReference type="GO" id="GO:0070181">
    <property type="term" value="F:small ribosomal subunit rRNA binding"/>
    <property type="evidence" value="ECO:0000250"/>
    <property type="project" value="UniProtKB"/>
</dbReference>
<dbReference type="GO" id="GO:0030371">
    <property type="term" value="F:translation repressor activity"/>
    <property type="evidence" value="ECO:0000250"/>
    <property type="project" value="UniProtKB"/>
</dbReference>
<dbReference type="GO" id="GO:0070417">
    <property type="term" value="P:cellular response to cold"/>
    <property type="evidence" value="ECO:0000266"/>
    <property type="project" value="RGD"/>
</dbReference>
<dbReference type="GO" id="GO:0048255">
    <property type="term" value="P:mRNA stabilization"/>
    <property type="evidence" value="ECO:0000250"/>
    <property type="project" value="UniProtKB"/>
</dbReference>
<dbReference type="GO" id="GO:0030308">
    <property type="term" value="P:negative regulation of cell growth"/>
    <property type="evidence" value="ECO:0000266"/>
    <property type="project" value="RGD"/>
</dbReference>
<dbReference type="GO" id="GO:0048026">
    <property type="term" value="P:positive regulation of mRNA splicing, via spliceosome"/>
    <property type="evidence" value="ECO:0000318"/>
    <property type="project" value="GO_Central"/>
</dbReference>
<dbReference type="GO" id="GO:0045727">
    <property type="term" value="P:positive regulation of translation"/>
    <property type="evidence" value="ECO:0000250"/>
    <property type="project" value="UniProtKB"/>
</dbReference>
<dbReference type="GO" id="GO:1902806">
    <property type="term" value="P:regulation of cell cycle G1/S phase transition"/>
    <property type="evidence" value="ECO:0000266"/>
    <property type="project" value="RGD"/>
</dbReference>
<dbReference type="GO" id="GO:0009411">
    <property type="term" value="P:response to UV"/>
    <property type="evidence" value="ECO:0000250"/>
    <property type="project" value="UniProtKB"/>
</dbReference>
<dbReference type="GO" id="GO:0034063">
    <property type="term" value="P:stress granule assembly"/>
    <property type="evidence" value="ECO:0000250"/>
    <property type="project" value="UniProtKB"/>
</dbReference>
<dbReference type="CDD" id="cd12449">
    <property type="entry name" value="RRM_CIRBP_RBM3"/>
    <property type="match status" value="1"/>
</dbReference>
<dbReference type="FunFam" id="3.30.70.330:FF:000174">
    <property type="entry name" value="cold-inducible RNA-binding protein isoform X2"/>
    <property type="match status" value="1"/>
</dbReference>
<dbReference type="Gene3D" id="3.30.70.330">
    <property type="match status" value="1"/>
</dbReference>
<dbReference type="InterPro" id="IPR012677">
    <property type="entry name" value="Nucleotide-bd_a/b_plait_sf"/>
</dbReference>
<dbReference type="InterPro" id="IPR035979">
    <property type="entry name" value="RBD_domain_sf"/>
</dbReference>
<dbReference type="InterPro" id="IPR050441">
    <property type="entry name" value="RBM"/>
</dbReference>
<dbReference type="InterPro" id="IPR034278">
    <property type="entry name" value="RBM3/CIRBP_RRM"/>
</dbReference>
<dbReference type="InterPro" id="IPR000504">
    <property type="entry name" value="RRM_dom"/>
</dbReference>
<dbReference type="InterPro" id="IPR003954">
    <property type="entry name" value="RRM_dom_euk"/>
</dbReference>
<dbReference type="PANTHER" id="PTHR48034">
    <property type="entry name" value="TRANSFORMER-2 SEX-DETERMINING PROTEIN-RELATED"/>
    <property type="match status" value="1"/>
</dbReference>
<dbReference type="Pfam" id="PF00076">
    <property type="entry name" value="RRM_1"/>
    <property type="match status" value="1"/>
</dbReference>
<dbReference type="SMART" id="SM00360">
    <property type="entry name" value="RRM"/>
    <property type="match status" value="1"/>
</dbReference>
<dbReference type="SMART" id="SM00361">
    <property type="entry name" value="RRM_1"/>
    <property type="match status" value="1"/>
</dbReference>
<dbReference type="SUPFAM" id="SSF54928">
    <property type="entry name" value="RNA-binding domain, RBD"/>
    <property type="match status" value="1"/>
</dbReference>
<dbReference type="PROSITE" id="PS50102">
    <property type="entry name" value="RRM"/>
    <property type="match status" value="1"/>
</dbReference>
<accession>P60825</accession>
<accession>O09069</accession>
<accession>O09148</accession>
<accession>Q61413</accession>
<gene>
    <name type="primary">Cirbp</name>
    <name type="synonym">Cirp</name>
</gene>
<proteinExistence type="evidence at transcript level"/>
<sequence>MASDEGKLFVGGLSFDTNEQALEQVFSKYGQISEVVVVKDRETQRSRGFGFVTFENIDDAKDAMMAMNGKSVDGRQIRVDQAGKSSDNRSRGYRGGSAGGRGFFRGGRSRGRGFSRGGGDRGYGGGRFESRSGGYGGSRDYYASRSQGGSYGYRSSGGSYRDSYDSYATHNE</sequence>
<protein>
    <recommendedName>
        <fullName>Cold-inducible RNA-binding protein</fullName>
    </recommendedName>
    <alternativeName>
        <fullName>A18 hnRNP</fullName>
    </alternativeName>
    <alternativeName>
        <fullName>Glycine-rich RNA-binding protein CIRP</fullName>
    </alternativeName>
</protein>
<name>CIRBP_RAT</name>
<reference key="1">
    <citation type="submission" date="1997-01" db="EMBL/GenBank/DDBJ databases">
        <title>Expression of cold inducible-RNA-binding protein (CIRP) in the rat brain.</title>
        <authorList>
            <person name="Xue J."/>
            <person name="Nishiyama H."/>
            <person name="Fujita J."/>
        </authorList>
    </citation>
    <scope>NUCLEOTIDE SEQUENCE [MRNA]</scope>
    <source>
        <strain>Wistar</strain>
        <tissue>Testis</tissue>
    </source>
</reference>
<evidence type="ECO:0000250" key="1"/>
<evidence type="ECO:0000250" key="2">
    <source>
        <dbReference type="UniProtKB" id="Q14011"/>
    </source>
</evidence>
<evidence type="ECO:0000255" key="3">
    <source>
        <dbReference type="PROSITE-ProRule" id="PRU00176"/>
    </source>
</evidence>
<evidence type="ECO:0000256" key="4">
    <source>
        <dbReference type="SAM" id="MobiDB-lite"/>
    </source>
</evidence>
<feature type="chain" id="PRO_0000081506" description="Cold-inducible RNA-binding protein">
    <location>
        <begin position="1"/>
        <end position="172"/>
    </location>
</feature>
<feature type="domain" description="RRM" evidence="3">
    <location>
        <begin position="6"/>
        <end position="84"/>
    </location>
</feature>
<feature type="region of interest" description="Disordered" evidence="4">
    <location>
        <begin position="70"/>
        <end position="172"/>
    </location>
</feature>
<feature type="compositionally biased region" description="Gly residues" evidence="4">
    <location>
        <begin position="93"/>
        <end position="105"/>
    </location>
</feature>
<feature type="compositionally biased region" description="Gly residues" evidence="4">
    <location>
        <begin position="114"/>
        <end position="137"/>
    </location>
</feature>
<feature type="compositionally biased region" description="Low complexity" evidence="4">
    <location>
        <begin position="138"/>
        <end position="172"/>
    </location>
</feature>
<feature type="modified residue" description="Phosphoserine" evidence="2">
    <location>
        <position position="130"/>
    </location>
</feature>
<feature type="modified residue" description="Phosphoserine" evidence="2">
    <location>
        <position position="138"/>
    </location>
</feature>
<feature type="modified residue" description="Phosphoserine" evidence="2">
    <location>
        <position position="146"/>
    </location>
</feature>
<feature type="modified residue" description="Phosphoserine" evidence="2">
    <location>
        <position position="156"/>
    </location>
</feature>
<feature type="modified residue" description="Phosphoserine" evidence="2">
    <location>
        <position position="159"/>
    </location>
</feature>
<feature type="modified residue" description="Phosphoserine" evidence="2">
    <location>
        <position position="163"/>
    </location>
</feature>
<organism>
    <name type="scientific">Rattus norvegicus</name>
    <name type="common">Rat</name>
    <dbReference type="NCBI Taxonomy" id="10116"/>
    <lineage>
        <taxon>Eukaryota</taxon>
        <taxon>Metazoa</taxon>
        <taxon>Chordata</taxon>
        <taxon>Craniata</taxon>
        <taxon>Vertebrata</taxon>
        <taxon>Euteleostomi</taxon>
        <taxon>Mammalia</taxon>
        <taxon>Eutheria</taxon>
        <taxon>Euarchontoglires</taxon>
        <taxon>Glires</taxon>
        <taxon>Rodentia</taxon>
        <taxon>Myomorpha</taxon>
        <taxon>Muroidea</taxon>
        <taxon>Muridae</taxon>
        <taxon>Murinae</taxon>
        <taxon>Rattus</taxon>
    </lineage>
</organism>